<gene>
    <name type="ORF">DDB_G0292188</name>
</gene>
<proteinExistence type="predicted"/>
<comment type="sequence caution" evidence="3">
    <conflict type="erroneous initiation">
        <sequence resource="EMBL-CDS" id="EDR41015"/>
    </conflict>
</comment>
<feature type="chain" id="PRO_0000389209" description="von Willebrand factor A domain-containing protein DDB_G0292188">
    <location>
        <begin position="1"/>
        <end position="750"/>
    </location>
</feature>
<feature type="domain" description="VWFA" evidence="1">
    <location>
        <begin position="17"/>
        <end position="249"/>
    </location>
</feature>
<feature type="region of interest" description="Disordered" evidence="2">
    <location>
        <begin position="586"/>
        <end position="657"/>
    </location>
</feature>
<feature type="compositionally biased region" description="Low complexity" evidence="2">
    <location>
        <begin position="586"/>
        <end position="595"/>
    </location>
</feature>
<feature type="compositionally biased region" description="Low complexity" evidence="2">
    <location>
        <begin position="603"/>
        <end position="645"/>
    </location>
</feature>
<reference key="1">
    <citation type="journal article" date="2005" name="Nature">
        <title>The genome of the social amoeba Dictyostelium discoideum.</title>
        <authorList>
            <person name="Eichinger L."/>
            <person name="Pachebat J.A."/>
            <person name="Gloeckner G."/>
            <person name="Rajandream M.A."/>
            <person name="Sucgang R."/>
            <person name="Berriman M."/>
            <person name="Song J."/>
            <person name="Olsen R."/>
            <person name="Szafranski K."/>
            <person name="Xu Q."/>
            <person name="Tunggal B."/>
            <person name="Kummerfeld S."/>
            <person name="Madera M."/>
            <person name="Konfortov B.A."/>
            <person name="Rivero F."/>
            <person name="Bankier A.T."/>
            <person name="Lehmann R."/>
            <person name="Hamlin N."/>
            <person name="Davies R."/>
            <person name="Gaudet P."/>
            <person name="Fey P."/>
            <person name="Pilcher K."/>
            <person name="Chen G."/>
            <person name="Saunders D."/>
            <person name="Sodergren E.J."/>
            <person name="Davis P."/>
            <person name="Kerhornou A."/>
            <person name="Nie X."/>
            <person name="Hall N."/>
            <person name="Anjard C."/>
            <person name="Hemphill L."/>
            <person name="Bason N."/>
            <person name="Farbrother P."/>
            <person name="Desany B."/>
            <person name="Just E."/>
            <person name="Morio T."/>
            <person name="Rost R."/>
            <person name="Churcher C.M."/>
            <person name="Cooper J."/>
            <person name="Haydock S."/>
            <person name="van Driessche N."/>
            <person name="Cronin A."/>
            <person name="Goodhead I."/>
            <person name="Muzny D.M."/>
            <person name="Mourier T."/>
            <person name="Pain A."/>
            <person name="Lu M."/>
            <person name="Harper D."/>
            <person name="Lindsay R."/>
            <person name="Hauser H."/>
            <person name="James K.D."/>
            <person name="Quiles M."/>
            <person name="Madan Babu M."/>
            <person name="Saito T."/>
            <person name="Buchrieser C."/>
            <person name="Wardroper A."/>
            <person name="Felder M."/>
            <person name="Thangavelu M."/>
            <person name="Johnson D."/>
            <person name="Knights A."/>
            <person name="Loulseged H."/>
            <person name="Mungall K.L."/>
            <person name="Oliver K."/>
            <person name="Price C."/>
            <person name="Quail M.A."/>
            <person name="Urushihara H."/>
            <person name="Hernandez J."/>
            <person name="Rabbinowitsch E."/>
            <person name="Steffen D."/>
            <person name="Sanders M."/>
            <person name="Ma J."/>
            <person name="Kohara Y."/>
            <person name="Sharp S."/>
            <person name="Simmonds M.N."/>
            <person name="Spiegler S."/>
            <person name="Tivey A."/>
            <person name="Sugano S."/>
            <person name="White B."/>
            <person name="Walker D."/>
            <person name="Woodward J.R."/>
            <person name="Winckler T."/>
            <person name="Tanaka Y."/>
            <person name="Shaulsky G."/>
            <person name="Schleicher M."/>
            <person name="Weinstock G.M."/>
            <person name="Rosenthal A."/>
            <person name="Cox E.C."/>
            <person name="Chisholm R.L."/>
            <person name="Gibbs R.A."/>
            <person name="Loomis W.F."/>
            <person name="Platzer M."/>
            <person name="Kay R.R."/>
            <person name="Williams J.G."/>
            <person name="Dear P.H."/>
            <person name="Noegel A.A."/>
            <person name="Barrell B.G."/>
            <person name="Kuspa A."/>
        </authorList>
    </citation>
    <scope>NUCLEOTIDE SEQUENCE [LARGE SCALE GENOMIC DNA]</scope>
    <source>
        <strain>AX4</strain>
    </source>
</reference>
<evidence type="ECO:0000255" key="1">
    <source>
        <dbReference type="PROSITE-ProRule" id="PRU00219"/>
    </source>
</evidence>
<evidence type="ECO:0000256" key="2">
    <source>
        <dbReference type="SAM" id="MobiDB-lite"/>
    </source>
</evidence>
<evidence type="ECO:0000305" key="3"/>
<accession>Q54DL7</accession>
<accession>B0G193</accession>
<protein>
    <recommendedName>
        <fullName>von Willebrand factor A domain-containing protein DDB_G0292188</fullName>
    </recommendedName>
</protein>
<sequence>MFTENQNNNQRHALKTEIKTVFNSDSGVTYFSILIETSSKMSLYNVIIKTFITQLQKANRECQIQIITYGDSVNTIFEFDSEPNELKDSLKEIKFSKDNEEAKLGEAMRMCFNNIESNWSSDLMSKIIIISSGQSTDDSSDDLVDILSLDNNSIYGLAGCNLANKSSDEAVKDLQSLLPDQKVIPLGKNPSQDIRLLMNGGGGAANGGGAANGASSSDEHSINCPVNIEVYPHTNETKSIKDDLLLDVVIKPDGNTASVPSGTKIKFLSNKYYSGYTIQLKQNLVFGEPYEETIKLEFKKGQMEKTQFENFPSKIIFHIELANDRDNVHEGFVALNISYFLGELKSKYRCCIGVEGEIGNGKSTCLNGFVNLFNPVGELEEYFNANRTSGTHVTTSINNTSLKEILSAKHYIHPVQESFHDIDIAWSDSWGFVDTDVQLRHKAEGRIHHGTKKDECTILQPDDRYRIDCFIFVVSIRNFTNPASMQRIEKKIKEVLQMNITPLLAITFSDTLSKNQLQDVMKNKVAELSVQESNTFIISNYTEKETHKDISKDVQYLRLLTKAVQLCKVKNEKDIMNKVKGISNLSINDNNNSFNQTPIKNQPFFESSSTSSPSPAFFRSPIQQQQQQTSTTSTQSPSPSSSSASTPPPPSQMLNEQPSKTINVTIDVVTDSSGTVLTSFEIESSTNESVSELKCKLINEIDPEMNANDWSITKESGTVLFESARLSSIIKSFDNSDSIKLVLKKKQKLF</sequence>
<keyword id="KW-1185">Reference proteome</keyword>
<dbReference type="EMBL" id="AAFI02000187">
    <property type="protein sequence ID" value="EDR41015.1"/>
    <property type="status" value="ALT_INIT"/>
    <property type="molecule type" value="Genomic_DNA"/>
</dbReference>
<dbReference type="EMBL" id="AAFI02000187">
    <property type="protein sequence ID" value="EAL61450.1"/>
    <property type="molecule type" value="Genomic_DNA"/>
</dbReference>
<dbReference type="RefSeq" id="XP_001733056.1">
    <property type="nucleotide sequence ID" value="XM_001733004.1"/>
</dbReference>
<dbReference type="RefSeq" id="XP_629855.1">
    <property type="nucleotide sequence ID" value="XM_629853.1"/>
</dbReference>
<dbReference type="FunCoup" id="Q54DL7">
    <property type="interactions" value="99"/>
</dbReference>
<dbReference type="STRING" id="44689.Q54DL7"/>
<dbReference type="PaxDb" id="44689-DDB0234030"/>
<dbReference type="EnsemblProtists" id="EAL61450">
    <property type="protein sequence ID" value="EAL61450"/>
    <property type="gene ID" value="DDB_G0292188"/>
</dbReference>
<dbReference type="EnsemblProtists" id="EDR41015">
    <property type="protein sequence ID" value="EDR41015"/>
    <property type="gene ID" value="DDB_G0292188"/>
</dbReference>
<dbReference type="GeneID" id="8628536"/>
<dbReference type="KEGG" id="ddi:DDB_G0292188"/>
<dbReference type="dictyBase" id="DDB_G0292188"/>
<dbReference type="VEuPathDB" id="AmoebaDB:DDB_G0292188"/>
<dbReference type="eggNOG" id="ENOG502RI33">
    <property type="taxonomic scope" value="Eukaryota"/>
</dbReference>
<dbReference type="InParanoid" id="Q54DL7"/>
<dbReference type="OMA" id="CEMERIC"/>
<dbReference type="PhylomeDB" id="Q54DL7"/>
<dbReference type="PRO" id="PR:Q54DL7"/>
<dbReference type="Proteomes" id="UP000002195">
    <property type="component" value="Chromosome 6"/>
</dbReference>
<dbReference type="GO" id="GO:0045121">
    <property type="term" value="C:membrane raft"/>
    <property type="evidence" value="ECO:0000314"/>
    <property type="project" value="dictyBase"/>
</dbReference>
<dbReference type="GO" id="GO:0031152">
    <property type="term" value="P:aggregation involved in sorocarp development"/>
    <property type="evidence" value="ECO:0000315"/>
    <property type="project" value="dictyBase"/>
</dbReference>
<dbReference type="GO" id="GO:0072752">
    <property type="term" value="P:cellular response to rapamycin"/>
    <property type="evidence" value="ECO:0000315"/>
    <property type="project" value="dictyBase"/>
</dbReference>
<dbReference type="GO" id="GO:0010628">
    <property type="term" value="P:positive regulation of gene expression"/>
    <property type="evidence" value="ECO:0000315"/>
    <property type="project" value="dictyBase"/>
</dbReference>
<dbReference type="CDD" id="cd00198">
    <property type="entry name" value="vWFA"/>
    <property type="match status" value="1"/>
</dbReference>
<dbReference type="Gene3D" id="3.40.50.300">
    <property type="entry name" value="P-loop containing nucleotide triphosphate hydrolases"/>
    <property type="match status" value="1"/>
</dbReference>
<dbReference type="Gene3D" id="3.40.50.410">
    <property type="entry name" value="von Willebrand factor, type A domain"/>
    <property type="match status" value="1"/>
</dbReference>
<dbReference type="InterPro" id="IPR027417">
    <property type="entry name" value="P-loop_NTPase"/>
</dbReference>
<dbReference type="InterPro" id="IPR002035">
    <property type="entry name" value="VWF_A"/>
</dbReference>
<dbReference type="InterPro" id="IPR036465">
    <property type="entry name" value="vWFA_dom_sf"/>
</dbReference>
<dbReference type="PANTHER" id="PTHR14241">
    <property type="entry name" value="INTERFERON-INDUCED PROTEIN 44"/>
    <property type="match status" value="1"/>
</dbReference>
<dbReference type="PANTHER" id="PTHR14241:SF32">
    <property type="entry name" value="VWFA DOMAIN-CONTAINING PROTEIN-RELATED"/>
    <property type="match status" value="1"/>
</dbReference>
<dbReference type="Pfam" id="PF00092">
    <property type="entry name" value="VWA"/>
    <property type="match status" value="1"/>
</dbReference>
<dbReference type="SUPFAM" id="SSF52540">
    <property type="entry name" value="P-loop containing nucleoside triphosphate hydrolases"/>
    <property type="match status" value="1"/>
</dbReference>
<dbReference type="SUPFAM" id="SSF53300">
    <property type="entry name" value="vWA-like"/>
    <property type="match status" value="1"/>
</dbReference>
<dbReference type="PROSITE" id="PS50234">
    <property type="entry name" value="VWFA"/>
    <property type="match status" value="1"/>
</dbReference>
<organism>
    <name type="scientific">Dictyostelium discoideum</name>
    <name type="common">Social amoeba</name>
    <dbReference type="NCBI Taxonomy" id="44689"/>
    <lineage>
        <taxon>Eukaryota</taxon>
        <taxon>Amoebozoa</taxon>
        <taxon>Evosea</taxon>
        <taxon>Eumycetozoa</taxon>
        <taxon>Dictyostelia</taxon>
        <taxon>Dictyosteliales</taxon>
        <taxon>Dictyosteliaceae</taxon>
        <taxon>Dictyostelium</taxon>
    </lineage>
</organism>
<name>Y2188_DICDI</name>